<proteinExistence type="inferred from homology"/>
<gene>
    <name evidence="1" type="primary">fusA</name>
    <name type="ordered locus">Plav_2733</name>
</gene>
<accession>A7HWQ8</accession>
<evidence type="ECO:0000255" key="1">
    <source>
        <dbReference type="HAMAP-Rule" id="MF_00054"/>
    </source>
</evidence>
<keyword id="KW-0963">Cytoplasm</keyword>
<keyword id="KW-0251">Elongation factor</keyword>
<keyword id="KW-0342">GTP-binding</keyword>
<keyword id="KW-0547">Nucleotide-binding</keyword>
<keyword id="KW-0648">Protein biosynthesis</keyword>
<keyword id="KW-1185">Reference proteome</keyword>
<organism>
    <name type="scientific">Parvibaculum lavamentivorans (strain DS-1 / DSM 13023 / NCIMB 13966)</name>
    <dbReference type="NCBI Taxonomy" id="402881"/>
    <lineage>
        <taxon>Bacteria</taxon>
        <taxon>Pseudomonadati</taxon>
        <taxon>Pseudomonadota</taxon>
        <taxon>Alphaproteobacteria</taxon>
        <taxon>Hyphomicrobiales</taxon>
        <taxon>Parvibaculaceae</taxon>
        <taxon>Parvibaculum</taxon>
    </lineage>
</organism>
<sequence length="691" mass="76849">MARKTKLEDYRNIGIMAHIDAGKTTTTERILFYTGVSHKIGEVHDGAATMDWMEQEQERGITITSAATTCFWKDKRINIIDTPGHVDFTIEVERSLRVLDGAVTVFDSVAGVEPQSETVWRQADKYRVPRMCFVNKMDRMGANFYRCVDMIVTRLGAVPLVTQLPIGSEAEFEGLIDLLKMQEIVWKDESLGAEFEYRDIRPELKEQADEYHAKMVELAVEMDDAVMEAYLEGNEPDEATLKKLIRKGTISRKFVPVLCGSAFKNKGVQPMLDAVVDFLPSPLEVERMQGIDPKTEEPDTRGASDDEPLSVLAFKIMNDPFVGSLTFCRIYSGVMTTGTGVLNSTKDNRERIGRMLQMHANHREDIKEAYAGDIVAVAGLKNTTTGDTLCDPLKPIILERMEFPEPVIEVAVEPKTKADQEKMGIALNRLAQEDPSFRVSVDQESGQTVIKGMGELHLDILVDRMRREFKVDANVGAPQVAYRETLTKRAEIDYTHKKQTGGSGQFARVKIVFEPGEPGSGFQFESKIVGGSVPKEYIPGVQKGVESVKDSGPLAGFPMIDFKATLMDGAYHDVDSSVMAFEIASRAAFREGAQQAGVKLLEPIMKVEVVTPEEYMGDVIGDLNSRRGQISGTEQRGIAQVIHANVPLANMFGYVNTLRSMSQGRAQYTMQFDHYEQVPQAVSDEVRAKLA</sequence>
<feature type="chain" id="PRO_1000071148" description="Elongation factor G">
    <location>
        <begin position="1"/>
        <end position="691"/>
    </location>
</feature>
<feature type="domain" description="tr-type G">
    <location>
        <begin position="8"/>
        <end position="283"/>
    </location>
</feature>
<feature type="binding site" evidence="1">
    <location>
        <begin position="17"/>
        <end position="24"/>
    </location>
    <ligand>
        <name>GTP</name>
        <dbReference type="ChEBI" id="CHEBI:37565"/>
    </ligand>
</feature>
<feature type="binding site" evidence="1">
    <location>
        <begin position="81"/>
        <end position="85"/>
    </location>
    <ligand>
        <name>GTP</name>
        <dbReference type="ChEBI" id="CHEBI:37565"/>
    </ligand>
</feature>
<feature type="binding site" evidence="1">
    <location>
        <begin position="135"/>
        <end position="138"/>
    </location>
    <ligand>
        <name>GTP</name>
        <dbReference type="ChEBI" id="CHEBI:37565"/>
    </ligand>
</feature>
<reference key="1">
    <citation type="journal article" date="2011" name="Stand. Genomic Sci.">
        <title>Complete genome sequence of Parvibaculum lavamentivorans type strain (DS-1(T)).</title>
        <authorList>
            <person name="Schleheck D."/>
            <person name="Weiss M."/>
            <person name="Pitluck S."/>
            <person name="Bruce D."/>
            <person name="Land M.L."/>
            <person name="Han S."/>
            <person name="Saunders E."/>
            <person name="Tapia R."/>
            <person name="Detter C."/>
            <person name="Brettin T."/>
            <person name="Han J."/>
            <person name="Woyke T."/>
            <person name="Goodwin L."/>
            <person name="Pennacchio L."/>
            <person name="Nolan M."/>
            <person name="Cook A.M."/>
            <person name="Kjelleberg S."/>
            <person name="Thomas T."/>
        </authorList>
    </citation>
    <scope>NUCLEOTIDE SEQUENCE [LARGE SCALE GENOMIC DNA]</scope>
    <source>
        <strain>DS-1 / DSM 13023 / NCIMB 13966</strain>
    </source>
</reference>
<comment type="function">
    <text evidence="1">Catalyzes the GTP-dependent ribosomal translocation step during translation elongation. During this step, the ribosome changes from the pre-translocational (PRE) to the post-translocational (POST) state as the newly formed A-site-bound peptidyl-tRNA and P-site-bound deacylated tRNA move to the P and E sites, respectively. Catalyzes the coordinated movement of the two tRNA molecules, the mRNA and conformational changes in the ribosome.</text>
</comment>
<comment type="subcellular location">
    <subcellularLocation>
        <location evidence="1">Cytoplasm</location>
    </subcellularLocation>
</comment>
<comment type="similarity">
    <text evidence="1">Belongs to the TRAFAC class translation factor GTPase superfamily. Classic translation factor GTPase family. EF-G/EF-2 subfamily.</text>
</comment>
<dbReference type="EMBL" id="CP000774">
    <property type="protein sequence ID" value="ABS64341.1"/>
    <property type="molecule type" value="Genomic_DNA"/>
</dbReference>
<dbReference type="RefSeq" id="WP_012111656.1">
    <property type="nucleotide sequence ID" value="NC_009719.1"/>
</dbReference>
<dbReference type="SMR" id="A7HWQ8"/>
<dbReference type="STRING" id="402881.Plav_2733"/>
<dbReference type="KEGG" id="pla:Plav_2733"/>
<dbReference type="eggNOG" id="COG0480">
    <property type="taxonomic scope" value="Bacteria"/>
</dbReference>
<dbReference type="HOGENOM" id="CLU_002794_4_1_5"/>
<dbReference type="OrthoDB" id="9802948at2"/>
<dbReference type="Proteomes" id="UP000006377">
    <property type="component" value="Chromosome"/>
</dbReference>
<dbReference type="GO" id="GO:0005737">
    <property type="term" value="C:cytoplasm"/>
    <property type="evidence" value="ECO:0007669"/>
    <property type="project" value="UniProtKB-SubCell"/>
</dbReference>
<dbReference type="GO" id="GO:0005525">
    <property type="term" value="F:GTP binding"/>
    <property type="evidence" value="ECO:0007669"/>
    <property type="project" value="UniProtKB-UniRule"/>
</dbReference>
<dbReference type="GO" id="GO:0003924">
    <property type="term" value="F:GTPase activity"/>
    <property type="evidence" value="ECO:0007669"/>
    <property type="project" value="InterPro"/>
</dbReference>
<dbReference type="GO" id="GO:0003746">
    <property type="term" value="F:translation elongation factor activity"/>
    <property type="evidence" value="ECO:0007669"/>
    <property type="project" value="UniProtKB-UniRule"/>
</dbReference>
<dbReference type="GO" id="GO:0032790">
    <property type="term" value="P:ribosome disassembly"/>
    <property type="evidence" value="ECO:0007669"/>
    <property type="project" value="TreeGrafter"/>
</dbReference>
<dbReference type="CDD" id="cd01886">
    <property type="entry name" value="EF-G"/>
    <property type="match status" value="1"/>
</dbReference>
<dbReference type="CDD" id="cd16262">
    <property type="entry name" value="EFG_III"/>
    <property type="match status" value="1"/>
</dbReference>
<dbReference type="CDD" id="cd01434">
    <property type="entry name" value="EFG_mtEFG1_IV"/>
    <property type="match status" value="1"/>
</dbReference>
<dbReference type="CDD" id="cd03713">
    <property type="entry name" value="EFG_mtEFG_C"/>
    <property type="match status" value="1"/>
</dbReference>
<dbReference type="CDD" id="cd04088">
    <property type="entry name" value="EFG_mtEFG_II"/>
    <property type="match status" value="1"/>
</dbReference>
<dbReference type="FunFam" id="2.40.30.10:FF:000006">
    <property type="entry name" value="Elongation factor G"/>
    <property type="match status" value="1"/>
</dbReference>
<dbReference type="FunFam" id="3.30.230.10:FF:000003">
    <property type="entry name" value="Elongation factor G"/>
    <property type="match status" value="1"/>
</dbReference>
<dbReference type="FunFam" id="3.30.70.240:FF:000001">
    <property type="entry name" value="Elongation factor G"/>
    <property type="match status" value="1"/>
</dbReference>
<dbReference type="FunFam" id="3.30.70.870:FF:000001">
    <property type="entry name" value="Elongation factor G"/>
    <property type="match status" value="1"/>
</dbReference>
<dbReference type="FunFam" id="3.40.50.300:FF:000029">
    <property type="entry name" value="Elongation factor G"/>
    <property type="match status" value="1"/>
</dbReference>
<dbReference type="Gene3D" id="3.30.230.10">
    <property type="match status" value="1"/>
</dbReference>
<dbReference type="Gene3D" id="3.30.70.240">
    <property type="match status" value="1"/>
</dbReference>
<dbReference type="Gene3D" id="3.30.70.870">
    <property type="entry name" value="Elongation Factor G (Translational Gtpase), domain 3"/>
    <property type="match status" value="1"/>
</dbReference>
<dbReference type="Gene3D" id="3.40.50.300">
    <property type="entry name" value="P-loop containing nucleotide triphosphate hydrolases"/>
    <property type="match status" value="1"/>
</dbReference>
<dbReference type="Gene3D" id="2.40.30.10">
    <property type="entry name" value="Translation factors"/>
    <property type="match status" value="1"/>
</dbReference>
<dbReference type="HAMAP" id="MF_00054_B">
    <property type="entry name" value="EF_G_EF_2_B"/>
    <property type="match status" value="1"/>
</dbReference>
<dbReference type="InterPro" id="IPR053905">
    <property type="entry name" value="EF-G-like_DII"/>
</dbReference>
<dbReference type="InterPro" id="IPR041095">
    <property type="entry name" value="EFG_II"/>
</dbReference>
<dbReference type="InterPro" id="IPR009022">
    <property type="entry name" value="EFG_III"/>
</dbReference>
<dbReference type="InterPro" id="IPR035647">
    <property type="entry name" value="EFG_III/V"/>
</dbReference>
<dbReference type="InterPro" id="IPR047872">
    <property type="entry name" value="EFG_IV"/>
</dbReference>
<dbReference type="InterPro" id="IPR035649">
    <property type="entry name" value="EFG_V"/>
</dbReference>
<dbReference type="InterPro" id="IPR000640">
    <property type="entry name" value="EFG_V-like"/>
</dbReference>
<dbReference type="InterPro" id="IPR031157">
    <property type="entry name" value="G_TR_CS"/>
</dbReference>
<dbReference type="InterPro" id="IPR027417">
    <property type="entry name" value="P-loop_NTPase"/>
</dbReference>
<dbReference type="InterPro" id="IPR020568">
    <property type="entry name" value="Ribosomal_Su5_D2-typ_SF"/>
</dbReference>
<dbReference type="InterPro" id="IPR014721">
    <property type="entry name" value="Ribsml_uS5_D2-typ_fold_subgr"/>
</dbReference>
<dbReference type="InterPro" id="IPR005225">
    <property type="entry name" value="Small_GTP-bd"/>
</dbReference>
<dbReference type="InterPro" id="IPR000795">
    <property type="entry name" value="T_Tr_GTP-bd_dom"/>
</dbReference>
<dbReference type="InterPro" id="IPR009000">
    <property type="entry name" value="Transl_B-barrel_sf"/>
</dbReference>
<dbReference type="InterPro" id="IPR004540">
    <property type="entry name" value="Transl_elong_EFG/EF2"/>
</dbReference>
<dbReference type="InterPro" id="IPR005517">
    <property type="entry name" value="Transl_elong_EFG/EF2_IV"/>
</dbReference>
<dbReference type="NCBIfam" id="TIGR00484">
    <property type="entry name" value="EF-G"/>
    <property type="match status" value="1"/>
</dbReference>
<dbReference type="NCBIfam" id="NF009381">
    <property type="entry name" value="PRK12740.1-5"/>
    <property type="match status" value="1"/>
</dbReference>
<dbReference type="NCBIfam" id="TIGR00231">
    <property type="entry name" value="small_GTP"/>
    <property type="match status" value="1"/>
</dbReference>
<dbReference type="PANTHER" id="PTHR43261:SF1">
    <property type="entry name" value="RIBOSOME-RELEASING FACTOR 2, MITOCHONDRIAL"/>
    <property type="match status" value="1"/>
</dbReference>
<dbReference type="PANTHER" id="PTHR43261">
    <property type="entry name" value="TRANSLATION ELONGATION FACTOR G-RELATED"/>
    <property type="match status" value="1"/>
</dbReference>
<dbReference type="Pfam" id="PF22042">
    <property type="entry name" value="EF-G_D2"/>
    <property type="match status" value="1"/>
</dbReference>
<dbReference type="Pfam" id="PF00679">
    <property type="entry name" value="EFG_C"/>
    <property type="match status" value="1"/>
</dbReference>
<dbReference type="Pfam" id="PF14492">
    <property type="entry name" value="EFG_III"/>
    <property type="match status" value="1"/>
</dbReference>
<dbReference type="Pfam" id="PF03764">
    <property type="entry name" value="EFG_IV"/>
    <property type="match status" value="1"/>
</dbReference>
<dbReference type="Pfam" id="PF00009">
    <property type="entry name" value="GTP_EFTU"/>
    <property type="match status" value="1"/>
</dbReference>
<dbReference type="PRINTS" id="PR00315">
    <property type="entry name" value="ELONGATNFCT"/>
</dbReference>
<dbReference type="SMART" id="SM00838">
    <property type="entry name" value="EFG_C"/>
    <property type="match status" value="1"/>
</dbReference>
<dbReference type="SMART" id="SM00889">
    <property type="entry name" value="EFG_IV"/>
    <property type="match status" value="1"/>
</dbReference>
<dbReference type="SUPFAM" id="SSF54980">
    <property type="entry name" value="EF-G C-terminal domain-like"/>
    <property type="match status" value="2"/>
</dbReference>
<dbReference type="SUPFAM" id="SSF52540">
    <property type="entry name" value="P-loop containing nucleoside triphosphate hydrolases"/>
    <property type="match status" value="1"/>
</dbReference>
<dbReference type="SUPFAM" id="SSF54211">
    <property type="entry name" value="Ribosomal protein S5 domain 2-like"/>
    <property type="match status" value="1"/>
</dbReference>
<dbReference type="SUPFAM" id="SSF50447">
    <property type="entry name" value="Translation proteins"/>
    <property type="match status" value="1"/>
</dbReference>
<dbReference type="PROSITE" id="PS00301">
    <property type="entry name" value="G_TR_1"/>
    <property type="match status" value="1"/>
</dbReference>
<dbReference type="PROSITE" id="PS51722">
    <property type="entry name" value="G_TR_2"/>
    <property type="match status" value="1"/>
</dbReference>
<name>EFG_PARL1</name>
<protein>
    <recommendedName>
        <fullName evidence="1">Elongation factor G</fullName>
        <shortName evidence="1">EF-G</shortName>
    </recommendedName>
</protein>